<sequence>MEPCELQNELVSAEGRNRKAVLCQRCGSRVLQPGTALFSRRQLFLPSMRKKPDLVDGSNPDGDVLEEHWLVNDMFIFENVGFTKDVGNVKFLVCADCEIGPIGWHCLDDKNSFYVALERVSHE</sequence>
<proteinExistence type="evidence at protein level"/>
<gene>
    <name type="primary">Rabif</name>
    <name type="synonym">Mss4</name>
</gene>
<name>MSS4_RAT</name>
<keyword id="KW-0002">3D-structure</keyword>
<keyword id="KW-0007">Acetylation</keyword>
<keyword id="KW-0344">Guanine-nucleotide releasing factor</keyword>
<keyword id="KW-0479">Metal-binding</keyword>
<keyword id="KW-0653">Protein transport</keyword>
<keyword id="KW-1185">Reference proteome</keyword>
<keyword id="KW-0813">Transport</keyword>
<keyword id="KW-0862">Zinc</keyword>
<accession>Q08326</accession>
<protein>
    <recommendedName>
        <fullName>Guanine nucleotide exchange factor MSS4</fullName>
    </recommendedName>
    <alternativeName>
        <fullName>Rab-interacting factor</fullName>
    </alternativeName>
</protein>
<feature type="chain" id="PRO_0000174176" description="Guanine nucleotide exchange factor MSS4">
    <location>
        <begin position="1"/>
        <end position="123"/>
    </location>
</feature>
<feature type="domain" description="MSS4" evidence="2">
    <location>
        <begin position="9"/>
        <end position="123"/>
    </location>
</feature>
<feature type="binding site" evidence="2">
    <location>
        <position position="23"/>
    </location>
    <ligand>
        <name>Zn(2+)</name>
        <dbReference type="ChEBI" id="CHEBI:29105"/>
    </ligand>
</feature>
<feature type="binding site" evidence="2">
    <location>
        <position position="26"/>
    </location>
    <ligand>
        <name>Zn(2+)</name>
        <dbReference type="ChEBI" id="CHEBI:29105"/>
    </ligand>
</feature>
<feature type="binding site" evidence="2">
    <location>
        <position position="94"/>
    </location>
    <ligand>
        <name>Zn(2+)</name>
        <dbReference type="ChEBI" id="CHEBI:29105"/>
    </ligand>
</feature>
<feature type="binding site" evidence="2">
    <location>
        <position position="97"/>
    </location>
    <ligand>
        <name>Zn(2+)</name>
        <dbReference type="ChEBI" id="CHEBI:29105"/>
    </ligand>
</feature>
<feature type="modified residue" description="N-acetylmethionine" evidence="1">
    <location>
        <position position="1"/>
    </location>
</feature>
<feature type="strand" evidence="3">
    <location>
        <begin position="15"/>
        <end position="19"/>
    </location>
</feature>
<feature type="strand" evidence="3">
    <location>
        <begin position="21"/>
        <end position="23"/>
    </location>
</feature>
<feature type="turn" evidence="3">
    <location>
        <begin position="24"/>
        <end position="26"/>
    </location>
</feature>
<feature type="strand" evidence="3">
    <location>
        <begin position="29"/>
        <end position="31"/>
    </location>
</feature>
<feature type="strand" evidence="3">
    <location>
        <begin position="35"/>
        <end position="39"/>
    </location>
</feature>
<feature type="strand" evidence="3">
    <location>
        <begin position="43"/>
        <end position="46"/>
    </location>
</feature>
<feature type="strand" evidence="3">
    <location>
        <begin position="62"/>
        <end position="65"/>
    </location>
</feature>
<feature type="strand" evidence="3">
    <location>
        <begin position="68"/>
        <end position="72"/>
    </location>
</feature>
<feature type="helix" evidence="3">
    <location>
        <begin position="74"/>
        <end position="76"/>
    </location>
</feature>
<feature type="strand" evidence="3">
    <location>
        <begin position="89"/>
        <end position="93"/>
    </location>
</feature>
<feature type="turn" evidence="3">
    <location>
        <begin position="95"/>
        <end position="97"/>
    </location>
</feature>
<feature type="strand" evidence="3">
    <location>
        <begin position="102"/>
        <end position="106"/>
    </location>
</feature>
<feature type="strand" evidence="3">
    <location>
        <begin position="113"/>
        <end position="116"/>
    </location>
</feature>
<feature type="helix" evidence="3">
    <location>
        <begin position="117"/>
        <end position="119"/>
    </location>
</feature>
<feature type="strand" evidence="3">
    <location>
        <begin position="120"/>
        <end position="122"/>
    </location>
</feature>
<comment type="function">
    <text evidence="1">Guanine-nucleotide-releasing protein that acts on members of the SEC4/YPT1/RAB subfamily. Stimulates GDP release from both YPT1, RAB3A and RAB10, but is less active on these proteins than on the SEC4 protein. Might play a general role in vesicular transport.</text>
</comment>
<comment type="subunit">
    <text evidence="1">Interacts with RAB8A.</text>
</comment>
<comment type="tissue specificity">
    <text>Ubiquitous.</text>
</comment>
<comment type="similarity">
    <text evidence="2">Belongs to the DSS4/MSS4 family.</text>
</comment>
<dbReference type="EMBL" id="X70496">
    <property type="protein sequence ID" value="CAA49904.1"/>
    <property type="molecule type" value="mRNA"/>
</dbReference>
<dbReference type="PIR" id="S29714">
    <property type="entry name" value="S29714"/>
</dbReference>
<dbReference type="RefSeq" id="NP_001007679.1">
    <property type="nucleotide sequence ID" value="NM_001007678.2"/>
</dbReference>
<dbReference type="RefSeq" id="XP_003749349.1">
    <property type="nucleotide sequence ID" value="XM_003749301.4"/>
</dbReference>
<dbReference type="PDB" id="1HXR">
    <property type="method" value="X-ray"/>
    <property type="resolution" value="1.65 A"/>
    <property type="chains" value="A/B=9-123"/>
</dbReference>
<dbReference type="PDBsum" id="1HXR"/>
<dbReference type="SMR" id="Q08326"/>
<dbReference type="BioGRID" id="257986">
    <property type="interactions" value="1"/>
</dbReference>
<dbReference type="FunCoup" id="Q08326">
    <property type="interactions" value="2456"/>
</dbReference>
<dbReference type="STRING" id="10116.ENSRNOP00000005845"/>
<dbReference type="PhosphoSitePlus" id="Q08326"/>
<dbReference type="PaxDb" id="10116-ENSRNOP00000005845"/>
<dbReference type="Ensembl" id="ENSRNOT00000005845.7">
    <property type="protein sequence ID" value="ENSRNOP00000005845.3"/>
    <property type="gene ID" value="ENSRNOG00000004424.7"/>
</dbReference>
<dbReference type="GeneID" id="304807"/>
<dbReference type="KEGG" id="rno:304807"/>
<dbReference type="UCSC" id="RGD:1359331">
    <property type="organism name" value="rat"/>
</dbReference>
<dbReference type="AGR" id="RGD:1359331"/>
<dbReference type="CTD" id="5877"/>
<dbReference type="RGD" id="1359331">
    <property type="gene designation" value="Rabif"/>
</dbReference>
<dbReference type="eggNOG" id="KOG4113">
    <property type="taxonomic scope" value="Eukaryota"/>
</dbReference>
<dbReference type="GeneTree" id="ENSGT00390000016889"/>
<dbReference type="HOGENOM" id="CLU_132754_0_0_1"/>
<dbReference type="InParanoid" id="Q08326"/>
<dbReference type="OMA" id="VPLMMQK"/>
<dbReference type="OrthoDB" id="30840at2759"/>
<dbReference type="PhylomeDB" id="Q08326"/>
<dbReference type="TreeFam" id="TF314029"/>
<dbReference type="EvolutionaryTrace" id="Q08326"/>
<dbReference type="PRO" id="PR:Q08326"/>
<dbReference type="Proteomes" id="UP000002494">
    <property type="component" value="Chromosome 13"/>
</dbReference>
<dbReference type="Bgee" id="ENSRNOG00000004424">
    <property type="expression patterns" value="Expressed in cerebellum and 19 other cell types or tissues"/>
</dbReference>
<dbReference type="ExpressionAtlas" id="Q08326">
    <property type="expression patterns" value="baseline and differential"/>
</dbReference>
<dbReference type="GO" id="GO:0005829">
    <property type="term" value="C:cytosol"/>
    <property type="evidence" value="ECO:0000318"/>
    <property type="project" value="GO_Central"/>
</dbReference>
<dbReference type="GO" id="GO:0016020">
    <property type="term" value="C:membrane"/>
    <property type="evidence" value="ECO:0000318"/>
    <property type="project" value="GO_Central"/>
</dbReference>
<dbReference type="GO" id="GO:0005085">
    <property type="term" value="F:guanyl-nucleotide exchange factor activity"/>
    <property type="evidence" value="ECO:0000318"/>
    <property type="project" value="GO_Central"/>
</dbReference>
<dbReference type="GO" id="GO:0008270">
    <property type="term" value="F:zinc ion binding"/>
    <property type="evidence" value="ECO:0000266"/>
    <property type="project" value="RGD"/>
</dbReference>
<dbReference type="GO" id="GO:0006892">
    <property type="term" value="P:post-Golgi vesicle-mediated transport"/>
    <property type="evidence" value="ECO:0000318"/>
    <property type="project" value="GO_Central"/>
</dbReference>
<dbReference type="GO" id="GO:0015031">
    <property type="term" value="P:protein transport"/>
    <property type="evidence" value="ECO:0007669"/>
    <property type="project" value="UniProtKB-KW"/>
</dbReference>
<dbReference type="GO" id="GO:0007264">
    <property type="term" value="P:small GTPase-mediated signal transduction"/>
    <property type="evidence" value="ECO:0007669"/>
    <property type="project" value="InterPro"/>
</dbReference>
<dbReference type="CDD" id="cd00246">
    <property type="entry name" value="RabGEF"/>
    <property type="match status" value="1"/>
</dbReference>
<dbReference type="FunFam" id="2.170.150.10:FF:000004">
    <property type="entry name" value="Guanine nucleotide exchange factor MSS4"/>
    <property type="match status" value="1"/>
</dbReference>
<dbReference type="Gene3D" id="2.170.150.10">
    <property type="entry name" value="Metal Binding Protein, Guanine Nucleotide Exchange Factor, Chain A"/>
    <property type="match status" value="1"/>
</dbReference>
<dbReference type="InterPro" id="IPR007515">
    <property type="entry name" value="Mss4"/>
</dbReference>
<dbReference type="InterPro" id="IPR011057">
    <property type="entry name" value="Mss4-like_sf"/>
</dbReference>
<dbReference type="InterPro" id="IPR011323">
    <property type="entry name" value="Mss4/transl-control_tumour"/>
</dbReference>
<dbReference type="PANTHER" id="PTHR13276">
    <property type="entry name" value="GUANINE NUCLEOTIDE EXCHANGE FACTOR MSS4"/>
    <property type="match status" value="1"/>
</dbReference>
<dbReference type="PANTHER" id="PTHR13276:SF0">
    <property type="entry name" value="GUANINE NUCLEOTIDE EXCHANGE FACTOR MSS4"/>
    <property type="match status" value="1"/>
</dbReference>
<dbReference type="Pfam" id="PF04421">
    <property type="entry name" value="Mss4"/>
    <property type="match status" value="1"/>
</dbReference>
<dbReference type="SUPFAM" id="SSF51316">
    <property type="entry name" value="Mss4-like"/>
    <property type="match status" value="1"/>
</dbReference>
<dbReference type="PROSITE" id="PS51796">
    <property type="entry name" value="MSS4"/>
    <property type="match status" value="1"/>
</dbReference>
<evidence type="ECO:0000250" key="1">
    <source>
        <dbReference type="UniProtKB" id="P47224"/>
    </source>
</evidence>
<evidence type="ECO:0000255" key="2">
    <source>
        <dbReference type="PROSITE-ProRule" id="PRU01132"/>
    </source>
</evidence>
<evidence type="ECO:0007829" key="3">
    <source>
        <dbReference type="PDB" id="1HXR"/>
    </source>
</evidence>
<organism>
    <name type="scientific">Rattus norvegicus</name>
    <name type="common">Rat</name>
    <dbReference type="NCBI Taxonomy" id="10116"/>
    <lineage>
        <taxon>Eukaryota</taxon>
        <taxon>Metazoa</taxon>
        <taxon>Chordata</taxon>
        <taxon>Craniata</taxon>
        <taxon>Vertebrata</taxon>
        <taxon>Euteleostomi</taxon>
        <taxon>Mammalia</taxon>
        <taxon>Eutheria</taxon>
        <taxon>Euarchontoglires</taxon>
        <taxon>Glires</taxon>
        <taxon>Rodentia</taxon>
        <taxon>Myomorpha</taxon>
        <taxon>Muroidea</taxon>
        <taxon>Muridae</taxon>
        <taxon>Murinae</taxon>
        <taxon>Rattus</taxon>
    </lineage>
</organism>
<reference key="1">
    <citation type="journal article" date="1993" name="Nature">
        <title>A mammalian guanine-nucleotide-releasing protein enhances function of yeast secretory protein Sec4.</title>
        <authorList>
            <person name="Burton J."/>
            <person name="Roberts D."/>
            <person name="Montaldi M."/>
            <person name="Novick P."/>
            <person name="de Camilli P."/>
        </authorList>
    </citation>
    <scope>NUCLEOTIDE SEQUENCE [MRNA]</scope>
    <source>
        <strain>Sprague-Dawley</strain>
        <tissue>Brain</tissue>
    </source>
</reference>
<reference key="2">
    <citation type="journal article" date="2001" name="Biochemistry">
        <title>A helical turn motif in Mss4 is a critical determinant of Rab binding and nucleotide release.</title>
        <authorList>
            <person name="Zhu Z."/>
            <person name="Dumas J.J."/>
            <person name="Lietzke S.E."/>
            <person name="Lambright D.G."/>
        </authorList>
    </citation>
    <scope>X-RAY CRYSTALLOGRAPHY (1.65 ANGSTROMS) OF 9-123</scope>
    <scope>ZINC-BINDING SITES</scope>
</reference>